<dbReference type="EC" id="2.3.1.97" evidence="2 4"/>
<dbReference type="EC" id="2.3.1.-" evidence="3"/>
<dbReference type="EMBL" id="AF043325">
    <property type="protein sequence ID" value="AAC09295.1"/>
    <property type="molecule type" value="mRNA"/>
</dbReference>
<dbReference type="EMBL" id="AF232826">
    <property type="protein sequence ID" value="AAF36406.2"/>
    <property type="molecule type" value="mRNA"/>
</dbReference>
<dbReference type="EMBL" id="BT007024">
    <property type="protein sequence ID" value="AAP35670.1"/>
    <property type="molecule type" value="mRNA"/>
</dbReference>
<dbReference type="EMBL" id="EF445001">
    <property type="protein sequence ID" value="ACA06028.1"/>
    <property type="molecule type" value="Genomic_DNA"/>
</dbReference>
<dbReference type="EMBL" id="EF445001">
    <property type="protein sequence ID" value="ACA06029.1"/>
    <property type="molecule type" value="Genomic_DNA"/>
</dbReference>
<dbReference type="EMBL" id="AL590365">
    <property type="status" value="NOT_ANNOTATED_CDS"/>
    <property type="molecule type" value="Genomic_DNA"/>
</dbReference>
<dbReference type="EMBL" id="CH471072">
    <property type="protein sequence ID" value="EAW86238.1"/>
    <property type="molecule type" value="Genomic_DNA"/>
</dbReference>
<dbReference type="EMBL" id="BC006376">
    <property type="protein sequence ID" value="AAH06376.1"/>
    <property type="molecule type" value="mRNA"/>
</dbReference>
<dbReference type="CCDS" id="CCDS7109.1"/>
<dbReference type="RefSeq" id="NP_001295224.1">
    <property type="nucleotide sequence ID" value="NM_001308295.1"/>
</dbReference>
<dbReference type="RefSeq" id="NP_004799.1">
    <property type="nucleotide sequence ID" value="NM_004808.3"/>
</dbReference>
<dbReference type="PDB" id="4C2X">
    <property type="method" value="X-ray"/>
    <property type="resolution" value="2.33 A"/>
    <property type="chains" value="A=112-498"/>
</dbReference>
<dbReference type="PDB" id="6PAU">
    <property type="method" value="X-ray"/>
    <property type="resolution" value="1.93 A"/>
    <property type="chains" value="A=116-498"/>
</dbReference>
<dbReference type="PDBsum" id="4C2X"/>
<dbReference type="PDBsum" id="6PAU"/>
<dbReference type="SMR" id="O60551"/>
<dbReference type="BioGRID" id="114794">
    <property type="interactions" value="84"/>
</dbReference>
<dbReference type="FunCoup" id="O60551">
    <property type="interactions" value="3136"/>
</dbReference>
<dbReference type="IntAct" id="O60551">
    <property type="interactions" value="61"/>
</dbReference>
<dbReference type="MINT" id="O60551"/>
<dbReference type="STRING" id="9606.ENSP00000367407"/>
<dbReference type="BindingDB" id="O60551"/>
<dbReference type="ChEMBL" id="CHEMBL2849"/>
<dbReference type="DrugBank" id="DB07838">
    <property type="generic name" value="(Z)-3-BENZYL-5-(2-HYDROXY-3-NITROBENZYLIDENE)-2-THIOXOTHIAZOLIDIN-4-ONE"/>
</dbReference>
<dbReference type="DrugBank" id="DB07061">
    <property type="generic name" value="1-(CYCLOHEXYLAMINO)-3-(6-METHYL-3,4-DIHYDRO-1H-CARBAZOL-9(2H)-YL)PROPAN-2-OL"/>
</dbReference>
<dbReference type="DrugBank" id="DB02180">
    <property type="generic name" value="Myristoyl-Coa"/>
</dbReference>
<dbReference type="DrugBank" id="DB02271">
    <property type="generic name" value="S-(2-oxo)pentadecylcoa"/>
</dbReference>
<dbReference type="GlyGen" id="O60551">
    <property type="glycosylation" value="1 site, 1 N-linked glycan (1 site)"/>
</dbReference>
<dbReference type="iPTMnet" id="O60551"/>
<dbReference type="MetOSite" id="O60551"/>
<dbReference type="PhosphoSitePlus" id="O60551"/>
<dbReference type="SwissPalm" id="O60551"/>
<dbReference type="BioMuta" id="NMT2"/>
<dbReference type="jPOST" id="O60551"/>
<dbReference type="MassIVE" id="O60551"/>
<dbReference type="PaxDb" id="9606-ENSP00000367407"/>
<dbReference type="PeptideAtlas" id="O60551"/>
<dbReference type="ProteomicsDB" id="49467"/>
<dbReference type="Pumba" id="O60551"/>
<dbReference type="Antibodypedia" id="673">
    <property type="antibodies" value="430 antibodies from 28 providers"/>
</dbReference>
<dbReference type="DNASU" id="9397"/>
<dbReference type="Ensembl" id="ENST00000378165.9">
    <property type="protein sequence ID" value="ENSP00000367407.3"/>
    <property type="gene ID" value="ENSG00000152465.18"/>
</dbReference>
<dbReference type="GeneID" id="9397"/>
<dbReference type="KEGG" id="hsa:9397"/>
<dbReference type="MANE-Select" id="ENST00000378165.9">
    <property type="protein sequence ID" value="ENSP00000367407.3"/>
    <property type="RefSeq nucleotide sequence ID" value="NM_004808.3"/>
    <property type="RefSeq protein sequence ID" value="NP_004799.1"/>
</dbReference>
<dbReference type="UCSC" id="uc001inz.2">
    <property type="organism name" value="human"/>
</dbReference>
<dbReference type="AGR" id="HGNC:7858"/>
<dbReference type="CTD" id="9397"/>
<dbReference type="DisGeNET" id="9397"/>
<dbReference type="GeneCards" id="NMT2"/>
<dbReference type="HGNC" id="HGNC:7858">
    <property type="gene designation" value="NMT2"/>
</dbReference>
<dbReference type="HPA" id="ENSG00000152465">
    <property type="expression patterns" value="Low tissue specificity"/>
</dbReference>
<dbReference type="MIM" id="603801">
    <property type="type" value="gene"/>
</dbReference>
<dbReference type="neXtProt" id="NX_O60551"/>
<dbReference type="OpenTargets" id="ENSG00000152465"/>
<dbReference type="PharmGKB" id="PA31662"/>
<dbReference type="VEuPathDB" id="HostDB:ENSG00000152465"/>
<dbReference type="eggNOG" id="KOG2779">
    <property type="taxonomic scope" value="Eukaryota"/>
</dbReference>
<dbReference type="GeneTree" id="ENSGT00390000017837"/>
<dbReference type="HOGENOM" id="CLU_022882_1_0_1"/>
<dbReference type="InParanoid" id="O60551"/>
<dbReference type="OMA" id="CPAMESE"/>
<dbReference type="OrthoDB" id="60315at2759"/>
<dbReference type="PAN-GO" id="O60551">
    <property type="GO annotations" value="3 GO annotations based on evolutionary models"/>
</dbReference>
<dbReference type="PhylomeDB" id="O60551"/>
<dbReference type="TreeFam" id="TF300701"/>
<dbReference type="BRENDA" id="2.3.1.97">
    <property type="organism ID" value="2681"/>
</dbReference>
<dbReference type="PathwayCommons" id="O60551"/>
<dbReference type="Reactome" id="R-HSA-174490">
    <property type="pathway name" value="Membrane binding and targetting of GAG proteins"/>
</dbReference>
<dbReference type="Reactome" id="R-HSA-203615">
    <property type="pathway name" value="eNOS activation"/>
</dbReference>
<dbReference type="Reactome" id="R-HSA-2514859">
    <property type="pathway name" value="Inactivation, recovery and regulation of the phototransduction cascade"/>
</dbReference>
<dbReference type="SignaLink" id="O60551"/>
<dbReference type="BioGRID-ORCS" id="9397">
    <property type="hits" value="12 hits in 1151 CRISPR screens"/>
</dbReference>
<dbReference type="ChiTaRS" id="NMT2">
    <property type="organism name" value="human"/>
</dbReference>
<dbReference type="EvolutionaryTrace" id="O60551"/>
<dbReference type="GeneWiki" id="NMT2"/>
<dbReference type="GenomeRNAi" id="9397"/>
<dbReference type="Pharos" id="O60551">
    <property type="development level" value="Tchem"/>
</dbReference>
<dbReference type="PRO" id="PR:O60551"/>
<dbReference type="Proteomes" id="UP000005640">
    <property type="component" value="Chromosome 10"/>
</dbReference>
<dbReference type="RNAct" id="O60551">
    <property type="molecule type" value="protein"/>
</dbReference>
<dbReference type="Bgee" id="ENSG00000152465">
    <property type="expression patterns" value="Expressed in endothelial cell and 193 other cell types or tissues"/>
</dbReference>
<dbReference type="ExpressionAtlas" id="O60551">
    <property type="expression patterns" value="baseline and differential"/>
</dbReference>
<dbReference type="GO" id="GO:0005737">
    <property type="term" value="C:cytoplasm"/>
    <property type="evidence" value="ECO:0000314"/>
    <property type="project" value="UniProtKB"/>
</dbReference>
<dbReference type="GO" id="GO:0005829">
    <property type="term" value="C:cytosol"/>
    <property type="evidence" value="ECO:0000314"/>
    <property type="project" value="HPA"/>
</dbReference>
<dbReference type="GO" id="GO:0005794">
    <property type="term" value="C:Golgi apparatus"/>
    <property type="evidence" value="ECO:0000314"/>
    <property type="project" value="HPA"/>
</dbReference>
<dbReference type="GO" id="GO:0043657">
    <property type="term" value="C:host cell"/>
    <property type="evidence" value="ECO:0007669"/>
    <property type="project" value="GOC"/>
</dbReference>
<dbReference type="GO" id="GO:0005886">
    <property type="term" value="C:plasma membrane"/>
    <property type="evidence" value="ECO:0000314"/>
    <property type="project" value="UniProtKB"/>
</dbReference>
<dbReference type="GO" id="GO:0004379">
    <property type="term" value="F:glycylpeptide N-tetradecanoyltransferase activity"/>
    <property type="evidence" value="ECO:0000314"/>
    <property type="project" value="UniProtKB"/>
</dbReference>
<dbReference type="GO" id="GO:0018030">
    <property type="term" value="F:peptidyl-lysine N6-myristoyltransferase activity"/>
    <property type="evidence" value="ECO:0000314"/>
    <property type="project" value="UniProtKB"/>
</dbReference>
<dbReference type="GO" id="GO:0075733">
    <property type="term" value="P:intracellular transport of virus"/>
    <property type="evidence" value="ECO:0000304"/>
    <property type="project" value="Reactome"/>
</dbReference>
<dbReference type="GO" id="GO:0018008">
    <property type="term" value="P:N-terminal peptidyl-glycine N-myristoylation"/>
    <property type="evidence" value="ECO:0000314"/>
    <property type="project" value="UniProtKB"/>
</dbReference>
<dbReference type="GO" id="GO:0072657">
    <property type="term" value="P:protein localization to membrane"/>
    <property type="evidence" value="ECO:0000318"/>
    <property type="project" value="GO_Central"/>
</dbReference>
<dbReference type="GO" id="GO:0022400">
    <property type="term" value="P:regulation of opsin-mediated signaling pathway"/>
    <property type="evidence" value="ECO:0000304"/>
    <property type="project" value="Reactome"/>
</dbReference>
<dbReference type="FunFam" id="3.40.630.170:FF:000001">
    <property type="entry name" value="Glycylpeptide N-tetradecanoyltransferase"/>
    <property type="match status" value="1"/>
</dbReference>
<dbReference type="Gene3D" id="3.40.630.170">
    <property type="match status" value="1"/>
</dbReference>
<dbReference type="InterPro" id="IPR016181">
    <property type="entry name" value="Acyl_CoA_acyltransferase"/>
</dbReference>
<dbReference type="InterPro" id="IPR000903">
    <property type="entry name" value="NMT"/>
</dbReference>
<dbReference type="InterPro" id="IPR022677">
    <property type="entry name" value="NMT_C"/>
</dbReference>
<dbReference type="InterPro" id="IPR022678">
    <property type="entry name" value="NMT_CS"/>
</dbReference>
<dbReference type="InterPro" id="IPR022676">
    <property type="entry name" value="NMT_N"/>
</dbReference>
<dbReference type="PANTHER" id="PTHR11377:SF14">
    <property type="entry name" value="GLYCYLPEPTIDE N-TETRADECANOYLTRANSFERASE 2"/>
    <property type="match status" value="1"/>
</dbReference>
<dbReference type="PANTHER" id="PTHR11377">
    <property type="entry name" value="N-MYRISTOYL TRANSFERASE"/>
    <property type="match status" value="1"/>
</dbReference>
<dbReference type="Pfam" id="PF01233">
    <property type="entry name" value="NMT"/>
    <property type="match status" value="1"/>
</dbReference>
<dbReference type="Pfam" id="PF02799">
    <property type="entry name" value="NMT_C"/>
    <property type="match status" value="1"/>
</dbReference>
<dbReference type="PIRSF" id="PIRSF015892">
    <property type="entry name" value="N-myristl_transf"/>
    <property type="match status" value="1"/>
</dbReference>
<dbReference type="SUPFAM" id="SSF55729">
    <property type="entry name" value="Acyl-CoA N-acyltransferases (Nat)"/>
    <property type="match status" value="2"/>
</dbReference>
<dbReference type="PROSITE" id="PS00975">
    <property type="entry name" value="NMT_1"/>
    <property type="match status" value="1"/>
</dbReference>
<dbReference type="PROSITE" id="PS00976">
    <property type="entry name" value="NMT_2"/>
    <property type="match status" value="1"/>
</dbReference>
<comment type="function">
    <text evidence="2 3 4">Adds a myristoyl group to the N-terminal glycine residue of certain cellular and viral proteins (PubMed:25255805, PubMed:9506952). Also able to mediate N-terminal lysine myristoylation of proteins: catalyzes myristoylation of ARF6 on both 'Gly-2' and 'Lys-3' (PubMed:32103017). Lysine myristoylation is required to maintain ARF6 on membranes during the GTPase cycle (PubMed:32103017).</text>
</comment>
<comment type="catalytic activity">
    <reaction evidence="2 3 4">
        <text>N-terminal glycyl-[protein] + tetradecanoyl-CoA = N-tetradecanoylglycyl-[protein] + CoA + H(+)</text>
        <dbReference type="Rhea" id="RHEA:15521"/>
        <dbReference type="Rhea" id="RHEA-COMP:12666"/>
        <dbReference type="Rhea" id="RHEA-COMP:12667"/>
        <dbReference type="ChEBI" id="CHEBI:15378"/>
        <dbReference type="ChEBI" id="CHEBI:57287"/>
        <dbReference type="ChEBI" id="CHEBI:57385"/>
        <dbReference type="ChEBI" id="CHEBI:64723"/>
        <dbReference type="ChEBI" id="CHEBI:133050"/>
        <dbReference type="EC" id="2.3.1.97"/>
    </reaction>
</comment>
<comment type="catalytic activity">
    <reaction evidence="3">
        <text>N-terminal glycyl-L-lysyl-[protein] + tetradecanoyl-CoA = N-terminal glycyl-(N(6)-tetradecanoyl)-L-lysyl-[protein] + CoA + H(+)</text>
        <dbReference type="Rhea" id="RHEA:70671"/>
        <dbReference type="Rhea" id="RHEA-COMP:17947"/>
        <dbReference type="Rhea" id="RHEA-COMP:17948"/>
        <dbReference type="ChEBI" id="CHEBI:15378"/>
        <dbReference type="ChEBI" id="CHEBI:57287"/>
        <dbReference type="ChEBI" id="CHEBI:57385"/>
        <dbReference type="ChEBI" id="CHEBI:189855"/>
        <dbReference type="ChEBI" id="CHEBI:189856"/>
    </reaction>
    <physiologicalReaction direction="left-to-right" evidence="3">
        <dbReference type="Rhea" id="RHEA:70672"/>
    </physiologicalReaction>
</comment>
<comment type="interaction">
    <interactant intactId="EBI-3920273">
        <id>O60551</id>
    </interactant>
    <interactant intactId="EBI-2848793">
        <id>Q9BR61</id>
        <label>ACBD6</label>
    </interactant>
    <organismsDiffer>false</organismsDiffer>
    <experiments>17</experiments>
</comment>
<comment type="interaction">
    <interactant intactId="EBI-3920273">
        <id>O60551</id>
    </interactant>
    <interactant intactId="EBI-1054703">
        <id>P20290-2</id>
        <label>BTF3</label>
    </interactant>
    <organismsDiffer>false</organismsDiffer>
    <experiments>3</experiments>
</comment>
<comment type="interaction">
    <interactant intactId="EBI-3920273">
        <id>O60551</id>
    </interactant>
    <interactant intactId="EBI-524064">
        <id>P42574</id>
        <label>CASP3</label>
    </interactant>
    <organismsDiffer>false</organismsDiffer>
    <experiments>2</experiments>
</comment>
<comment type="interaction">
    <interactant intactId="EBI-3920273">
        <id>O60551</id>
    </interactant>
    <interactant intactId="EBI-9057780">
        <id>Q96KN1</id>
        <label>LRATD2</label>
    </interactant>
    <organismsDiffer>false</organismsDiffer>
    <experiments>3</experiments>
</comment>
<comment type="interaction">
    <interactant intactId="EBI-3920273">
        <id>O60551</id>
    </interactant>
    <interactant intactId="EBI-473160">
        <id>Q8N2W9</id>
        <label>PIAS4</label>
    </interactant>
    <organismsDiffer>false</organismsDiffer>
    <experiments>3</experiments>
</comment>
<comment type="subcellular location">
    <subcellularLocation>
        <location evidence="4">Cytoplasm</location>
    </subcellularLocation>
    <subcellularLocation>
        <location evidence="4">Membrane</location>
        <topology evidence="4">Peripheral membrane protein</topology>
    </subcellularLocation>
</comment>
<comment type="similarity">
    <text evidence="6">Belongs to the NMT family.</text>
</comment>
<comment type="caution">
    <text evidence="6">Sequence AAF36406.2 was incorrectly indicated as originating from bovine.</text>
</comment>
<protein>
    <recommendedName>
        <fullName>Glycylpeptide N-tetradecanoyltransferase 2</fullName>
        <ecNumber evidence="2 4">2.3.1.97</ecNumber>
    </recommendedName>
    <alternativeName>
        <fullName>Myristoyl-CoA:protein N-myristoyltransferase 2</fullName>
        <shortName>NMT 2</shortName>
    </alternativeName>
    <alternativeName>
        <fullName>Peptide N-myristoyltransferase 2</fullName>
    </alternativeName>
    <alternativeName>
        <fullName evidence="6">Protein-lysine myristoyltransferase NMT2</fullName>
        <ecNumber evidence="3">2.3.1.-</ecNumber>
    </alternativeName>
    <alternativeName>
        <fullName>Type II N-myristoyltransferase</fullName>
    </alternativeName>
</protein>
<organism>
    <name type="scientific">Homo sapiens</name>
    <name type="common">Human</name>
    <dbReference type="NCBI Taxonomy" id="9606"/>
    <lineage>
        <taxon>Eukaryota</taxon>
        <taxon>Metazoa</taxon>
        <taxon>Chordata</taxon>
        <taxon>Craniata</taxon>
        <taxon>Vertebrata</taxon>
        <taxon>Euteleostomi</taxon>
        <taxon>Mammalia</taxon>
        <taxon>Eutheria</taxon>
        <taxon>Euarchontoglires</taxon>
        <taxon>Primates</taxon>
        <taxon>Haplorrhini</taxon>
        <taxon>Catarrhini</taxon>
        <taxon>Hominidae</taxon>
        <taxon>Homo</taxon>
    </lineage>
</organism>
<proteinExistence type="evidence at protein level"/>
<gene>
    <name evidence="5 7" type="primary">NMT2</name>
</gene>
<feature type="chain" id="PRO_0000064226" description="Glycylpeptide N-tetradecanoyltransferase 2">
    <location>
        <begin position="1"/>
        <end position="498"/>
    </location>
</feature>
<feature type="region of interest" description="Disordered" evidence="1">
    <location>
        <begin position="1"/>
        <end position="88"/>
    </location>
</feature>
<feature type="compositionally biased region" description="Acidic residues" evidence="1">
    <location>
        <begin position="15"/>
        <end position="32"/>
    </location>
</feature>
<feature type="compositionally biased region" description="Basic residues" evidence="1">
    <location>
        <begin position="45"/>
        <end position="57"/>
    </location>
</feature>
<feature type="compositionally biased region" description="Polar residues" evidence="1">
    <location>
        <begin position="61"/>
        <end position="86"/>
    </location>
</feature>
<feature type="binding site" evidence="2">
    <location>
        <position position="117"/>
    </location>
    <ligand>
        <name>tetradecanoyl-CoA</name>
        <dbReference type="ChEBI" id="CHEBI:57385"/>
    </ligand>
</feature>
<feature type="binding site" evidence="2">
    <location>
        <position position="122"/>
    </location>
    <ligand>
        <name>tetradecanoyl-CoA</name>
        <dbReference type="ChEBI" id="CHEBI:57385"/>
    </ligand>
</feature>
<feature type="binding site" evidence="2">
    <location>
        <position position="250"/>
    </location>
    <ligand>
        <name>tetradecanoyl-CoA</name>
        <dbReference type="ChEBI" id="CHEBI:57385"/>
    </ligand>
</feature>
<feature type="binding site" evidence="2">
    <location>
        <position position="252"/>
    </location>
    <ligand>
        <name>tetradecanoyl-CoA</name>
        <dbReference type="ChEBI" id="CHEBI:57385"/>
    </ligand>
</feature>
<feature type="binding site" evidence="2">
    <location>
        <position position="258"/>
    </location>
    <ligand>
        <name>tetradecanoyl-CoA</name>
        <dbReference type="ChEBI" id="CHEBI:57385"/>
    </ligand>
</feature>
<feature type="binding site" evidence="2">
    <location>
        <position position="260"/>
    </location>
    <ligand>
        <name>tetradecanoyl-CoA</name>
        <dbReference type="ChEBI" id="CHEBI:57385"/>
    </ligand>
</feature>
<feature type="binding site" evidence="2">
    <location>
        <position position="261"/>
    </location>
    <ligand>
        <name>tetradecanoyl-CoA</name>
        <dbReference type="ChEBI" id="CHEBI:57385"/>
    </ligand>
</feature>
<feature type="binding site" evidence="2">
    <location>
        <position position="262"/>
    </location>
    <ligand>
        <name>tetradecanoyl-CoA</name>
        <dbReference type="ChEBI" id="CHEBI:57385"/>
    </ligand>
</feature>
<feature type="modified residue" description="Phosphoserine" evidence="9 10">
    <location>
        <position position="38"/>
    </location>
</feature>
<feature type="sequence conflict" description="In Ref. 3; AAP35670 and 7; AAH06376." evidence="6" ref="3 7">
    <original>R</original>
    <variation>K</variation>
    <location>
        <position position="306"/>
    </location>
</feature>
<feature type="helix" evidence="11">
    <location>
        <begin position="122"/>
        <end position="124"/>
    </location>
</feature>
<feature type="strand" evidence="11">
    <location>
        <begin position="125"/>
        <end position="127"/>
    </location>
</feature>
<feature type="strand" evidence="12">
    <location>
        <begin position="158"/>
        <end position="162"/>
    </location>
</feature>
<feature type="helix" evidence="12">
    <location>
        <begin position="168"/>
        <end position="181"/>
    </location>
</feature>
<feature type="strand" evidence="12">
    <location>
        <begin position="188"/>
        <end position="192"/>
    </location>
</feature>
<feature type="helix" evidence="12">
    <location>
        <begin position="196"/>
        <end position="203"/>
    </location>
</feature>
<feature type="helix" evidence="12">
    <location>
        <begin position="210"/>
        <end position="212"/>
    </location>
</feature>
<feature type="strand" evidence="12">
    <location>
        <begin position="213"/>
        <end position="218"/>
    </location>
</feature>
<feature type="turn" evidence="12">
    <location>
        <begin position="219"/>
        <end position="221"/>
    </location>
</feature>
<feature type="strand" evidence="12">
    <location>
        <begin position="224"/>
        <end position="237"/>
    </location>
</feature>
<feature type="strand" evidence="12">
    <location>
        <begin position="240"/>
        <end position="252"/>
    </location>
</feature>
<feature type="helix" evidence="12">
    <location>
        <begin position="254"/>
        <end position="256"/>
    </location>
</feature>
<feature type="helix" evidence="12">
    <location>
        <begin position="261"/>
        <end position="274"/>
    </location>
</feature>
<feature type="turn" evidence="12">
    <location>
        <begin position="275"/>
        <end position="277"/>
    </location>
</feature>
<feature type="strand" evidence="12">
    <location>
        <begin position="281"/>
        <end position="287"/>
    </location>
</feature>
<feature type="strand" evidence="12">
    <location>
        <begin position="293"/>
        <end position="304"/>
    </location>
</feature>
<feature type="helix" evidence="12">
    <location>
        <begin position="305"/>
        <end position="310"/>
    </location>
</feature>
<feature type="strand" evidence="12">
    <location>
        <begin position="318"/>
        <end position="320"/>
    </location>
</feature>
<feature type="helix" evidence="12">
    <location>
        <begin position="322"/>
        <end position="328"/>
    </location>
</feature>
<feature type="strand" evidence="12">
    <location>
        <begin position="340"/>
        <end position="342"/>
    </location>
</feature>
<feature type="helix" evidence="12">
    <location>
        <begin position="345"/>
        <end position="347"/>
    </location>
</feature>
<feature type="helix" evidence="12">
    <location>
        <begin position="348"/>
        <end position="358"/>
    </location>
</feature>
<feature type="helix" evidence="12">
    <location>
        <begin position="359"/>
        <end position="361"/>
    </location>
</feature>
<feature type="strand" evidence="12">
    <location>
        <begin position="362"/>
        <end position="366"/>
    </location>
</feature>
<feature type="helix" evidence="12">
    <location>
        <begin position="370"/>
        <end position="377"/>
    </location>
</feature>
<feature type="turn" evidence="12">
    <location>
        <begin position="381"/>
        <end position="383"/>
    </location>
</feature>
<feature type="strand" evidence="12">
    <location>
        <begin position="384"/>
        <end position="390"/>
    </location>
</feature>
<feature type="strand" evidence="11">
    <location>
        <begin position="392"/>
        <end position="394"/>
    </location>
</feature>
<feature type="strand" evidence="12">
    <location>
        <begin position="396"/>
        <end position="404"/>
    </location>
</feature>
<feature type="strand" evidence="12">
    <location>
        <begin position="407"/>
        <end position="409"/>
    </location>
</feature>
<feature type="strand" evidence="11">
    <location>
        <begin position="416"/>
        <end position="418"/>
    </location>
</feature>
<feature type="strand" evidence="12">
    <location>
        <begin position="420"/>
        <end position="423"/>
    </location>
</feature>
<feature type="strand" evidence="12">
    <location>
        <begin position="427"/>
        <end position="431"/>
    </location>
</feature>
<feature type="helix" evidence="12">
    <location>
        <begin position="433"/>
        <end position="446"/>
    </location>
</feature>
<feature type="strand" evidence="12">
    <location>
        <begin position="450"/>
        <end position="456"/>
    </location>
</feature>
<feature type="helix" evidence="12">
    <location>
        <begin position="460"/>
        <end position="462"/>
    </location>
</feature>
<feature type="turn" evidence="12">
    <location>
        <begin position="463"/>
        <end position="468"/>
    </location>
</feature>
<feature type="strand" evidence="12">
    <location>
        <begin position="470"/>
        <end position="482"/>
    </location>
</feature>
<feature type="helix" evidence="12">
    <location>
        <begin position="490"/>
        <end position="492"/>
    </location>
</feature>
<name>NMT2_HUMAN</name>
<sequence length="498" mass="56980">MAEDSESAASQQSLELDDQDTCGIDGDNEEETEHAKGSPGGYLGAKKKKKKQKRKKEKPNSGGTKSDSASDSQEIKIQQPSKNPSVPMQKLQDIQRAMELLSACQGPARNIDEAAKHRYQFWDTQPVPKLDEVITSHGAIEPDKDNVRQEPYSLPQGFMWDTLDLSDAEVLKELYTLLNENYVEDDDNMFRFDYSPEFLLWALRPPGWLLQWHCGVRVSSNKKLVGFISAIPANIRIYDSVKKMVEINFLCVHKKLRSKRVAPVLIREITRRVNLEGIFQAVYTAGVVLPKPIATCRYWHRSLNPRKLVEVKFSHLSRNMTLQRTMKLYRLPDVTKTSGLRPMEPKDIKSVRELINTYLKQFHLAPVMDEEEVAHWFLPREHIIDTFVVESPNGKLTDFLSFYTLPSTVMHHPAHKSLKAAYSFYNIHTETPLLDLMSDALILAKSKGFDVFNALDLMENKTFLEKLKFGIGDGNLQYYLYNWRCPGTDSEKVGLVLQ</sequence>
<reference key="1">
    <citation type="journal article" date="1998" name="J. Biol. Chem.">
        <title>A second mammalian N-myristoyltransferase.</title>
        <authorList>
            <person name="Giang D.K."/>
            <person name="Cravatt B.F."/>
        </authorList>
    </citation>
    <scope>NUCLEOTIDE SEQUENCE [MRNA]</scope>
    <scope>CATALYTIC ACTIVITY</scope>
    <scope>FUNCTION</scope>
    <scope>SUBCELLULAR LOCATION</scope>
    <source>
        <tissue>Liver</tissue>
    </source>
</reference>
<reference key="2">
    <citation type="submission" date="2000-09" db="EMBL/GenBank/DDBJ databases">
        <authorList>
            <person name="Rundle D.R."/>
            <person name="Anderson R.E."/>
        </authorList>
    </citation>
    <scope>NUCLEOTIDE SEQUENCE [MRNA]</scope>
    <source>
        <tissue>Liver</tissue>
    </source>
</reference>
<reference key="3">
    <citation type="submission" date="2003-05" db="EMBL/GenBank/DDBJ databases">
        <title>Cloning of human full-length CDSs in BD Creator(TM) system donor vector.</title>
        <authorList>
            <person name="Kalnine N."/>
            <person name="Chen X."/>
            <person name="Rolfs A."/>
            <person name="Halleck A."/>
            <person name="Hines L."/>
            <person name="Eisenstein S."/>
            <person name="Koundinya M."/>
            <person name="Raphael J."/>
            <person name="Moreira D."/>
            <person name="Kelley T."/>
            <person name="LaBaer J."/>
            <person name="Lin Y."/>
            <person name="Phelan M."/>
            <person name="Farmer A."/>
        </authorList>
    </citation>
    <scope>NUCLEOTIDE SEQUENCE [LARGE SCALE MRNA]</scope>
</reference>
<reference key="4">
    <citation type="submission" date="2007-02" db="EMBL/GenBank/DDBJ databases">
        <authorList>
            <consortium name="NHLBI resequencing and genotyping service (RS&amp;G)"/>
        </authorList>
    </citation>
    <scope>NUCLEOTIDE SEQUENCE [GENOMIC DNA]</scope>
</reference>
<reference key="5">
    <citation type="journal article" date="2004" name="Nature">
        <title>The DNA sequence and comparative analysis of human chromosome 10.</title>
        <authorList>
            <person name="Deloukas P."/>
            <person name="Earthrowl M.E."/>
            <person name="Grafham D.V."/>
            <person name="Rubenfield M."/>
            <person name="French L."/>
            <person name="Steward C.A."/>
            <person name="Sims S.K."/>
            <person name="Jones M.C."/>
            <person name="Searle S."/>
            <person name="Scott C."/>
            <person name="Howe K."/>
            <person name="Hunt S.E."/>
            <person name="Andrews T.D."/>
            <person name="Gilbert J.G.R."/>
            <person name="Swarbreck D."/>
            <person name="Ashurst J.L."/>
            <person name="Taylor A."/>
            <person name="Battles J."/>
            <person name="Bird C.P."/>
            <person name="Ainscough R."/>
            <person name="Almeida J.P."/>
            <person name="Ashwell R.I.S."/>
            <person name="Ambrose K.D."/>
            <person name="Babbage A.K."/>
            <person name="Bagguley C.L."/>
            <person name="Bailey J."/>
            <person name="Banerjee R."/>
            <person name="Bates K."/>
            <person name="Beasley H."/>
            <person name="Bray-Allen S."/>
            <person name="Brown A.J."/>
            <person name="Brown J.Y."/>
            <person name="Burford D.C."/>
            <person name="Burrill W."/>
            <person name="Burton J."/>
            <person name="Cahill P."/>
            <person name="Camire D."/>
            <person name="Carter N.P."/>
            <person name="Chapman J.C."/>
            <person name="Clark S.Y."/>
            <person name="Clarke G."/>
            <person name="Clee C.M."/>
            <person name="Clegg S."/>
            <person name="Corby N."/>
            <person name="Coulson A."/>
            <person name="Dhami P."/>
            <person name="Dutta I."/>
            <person name="Dunn M."/>
            <person name="Faulkner L."/>
            <person name="Frankish A."/>
            <person name="Frankland J.A."/>
            <person name="Garner P."/>
            <person name="Garnett J."/>
            <person name="Gribble S."/>
            <person name="Griffiths C."/>
            <person name="Grocock R."/>
            <person name="Gustafson E."/>
            <person name="Hammond S."/>
            <person name="Harley J.L."/>
            <person name="Hart E."/>
            <person name="Heath P.D."/>
            <person name="Ho T.P."/>
            <person name="Hopkins B."/>
            <person name="Horne J."/>
            <person name="Howden P.J."/>
            <person name="Huckle E."/>
            <person name="Hynds C."/>
            <person name="Johnson C."/>
            <person name="Johnson D."/>
            <person name="Kana A."/>
            <person name="Kay M."/>
            <person name="Kimberley A.M."/>
            <person name="Kershaw J.K."/>
            <person name="Kokkinaki M."/>
            <person name="Laird G.K."/>
            <person name="Lawlor S."/>
            <person name="Lee H.M."/>
            <person name="Leongamornlert D.A."/>
            <person name="Laird G."/>
            <person name="Lloyd C."/>
            <person name="Lloyd D.M."/>
            <person name="Loveland J."/>
            <person name="Lovell J."/>
            <person name="McLaren S."/>
            <person name="McLay K.E."/>
            <person name="McMurray A."/>
            <person name="Mashreghi-Mohammadi M."/>
            <person name="Matthews L."/>
            <person name="Milne S."/>
            <person name="Nickerson T."/>
            <person name="Nguyen M."/>
            <person name="Overton-Larty E."/>
            <person name="Palmer S.A."/>
            <person name="Pearce A.V."/>
            <person name="Peck A.I."/>
            <person name="Pelan S."/>
            <person name="Phillimore B."/>
            <person name="Porter K."/>
            <person name="Rice C.M."/>
            <person name="Rogosin A."/>
            <person name="Ross M.T."/>
            <person name="Sarafidou T."/>
            <person name="Sehra H.K."/>
            <person name="Shownkeen R."/>
            <person name="Skuce C.D."/>
            <person name="Smith M."/>
            <person name="Standring L."/>
            <person name="Sycamore N."/>
            <person name="Tester J."/>
            <person name="Thorpe A."/>
            <person name="Torcasso W."/>
            <person name="Tracey A."/>
            <person name="Tromans A."/>
            <person name="Tsolas J."/>
            <person name="Wall M."/>
            <person name="Walsh J."/>
            <person name="Wang H."/>
            <person name="Weinstock K."/>
            <person name="West A.P."/>
            <person name="Willey D.L."/>
            <person name="Whitehead S.L."/>
            <person name="Wilming L."/>
            <person name="Wray P.W."/>
            <person name="Young L."/>
            <person name="Chen Y."/>
            <person name="Lovering R.C."/>
            <person name="Moschonas N.K."/>
            <person name="Siebert R."/>
            <person name="Fechtel K."/>
            <person name="Bentley D."/>
            <person name="Durbin R.M."/>
            <person name="Hubbard T."/>
            <person name="Doucette-Stamm L."/>
            <person name="Beck S."/>
            <person name="Smith D.R."/>
            <person name="Rogers J."/>
        </authorList>
    </citation>
    <scope>NUCLEOTIDE SEQUENCE [LARGE SCALE GENOMIC DNA]</scope>
</reference>
<reference key="6">
    <citation type="submission" date="2005-09" db="EMBL/GenBank/DDBJ databases">
        <authorList>
            <person name="Mural R.J."/>
            <person name="Istrail S."/>
            <person name="Sutton G.G."/>
            <person name="Florea L."/>
            <person name="Halpern A.L."/>
            <person name="Mobarry C.M."/>
            <person name="Lippert R."/>
            <person name="Walenz B."/>
            <person name="Shatkay H."/>
            <person name="Dew I."/>
            <person name="Miller J.R."/>
            <person name="Flanigan M.J."/>
            <person name="Edwards N.J."/>
            <person name="Bolanos R."/>
            <person name="Fasulo D."/>
            <person name="Halldorsson B.V."/>
            <person name="Hannenhalli S."/>
            <person name="Turner R."/>
            <person name="Yooseph S."/>
            <person name="Lu F."/>
            <person name="Nusskern D.R."/>
            <person name="Shue B.C."/>
            <person name="Zheng X.H."/>
            <person name="Zhong F."/>
            <person name="Delcher A.L."/>
            <person name="Huson D.H."/>
            <person name="Kravitz S.A."/>
            <person name="Mouchard L."/>
            <person name="Reinert K."/>
            <person name="Remington K.A."/>
            <person name="Clark A.G."/>
            <person name="Waterman M.S."/>
            <person name="Eichler E.E."/>
            <person name="Adams M.D."/>
            <person name="Hunkapiller M.W."/>
            <person name="Myers E.W."/>
            <person name="Venter J.C."/>
        </authorList>
    </citation>
    <scope>NUCLEOTIDE SEQUENCE [LARGE SCALE GENOMIC DNA]</scope>
</reference>
<reference key="7">
    <citation type="journal article" date="2004" name="Genome Res.">
        <title>The status, quality, and expansion of the NIH full-length cDNA project: the Mammalian Gene Collection (MGC).</title>
        <authorList>
            <consortium name="The MGC Project Team"/>
        </authorList>
    </citation>
    <scope>NUCLEOTIDE SEQUENCE [LARGE SCALE MRNA]</scope>
    <source>
        <tissue>Skin</tissue>
    </source>
</reference>
<reference key="8">
    <citation type="journal article" date="2011" name="BMC Syst. Biol.">
        <title>Initial characterization of the human central proteome.</title>
        <authorList>
            <person name="Burkard T.R."/>
            <person name="Planyavsky M."/>
            <person name="Kaupe I."/>
            <person name="Breitwieser F.P."/>
            <person name="Buerckstuemmer T."/>
            <person name="Bennett K.L."/>
            <person name="Superti-Furga G."/>
            <person name="Colinge J."/>
        </authorList>
    </citation>
    <scope>IDENTIFICATION BY MASS SPECTROMETRY [LARGE SCALE ANALYSIS]</scope>
</reference>
<reference key="9">
    <citation type="journal article" date="2013" name="J. Proteome Res.">
        <title>Toward a comprehensive characterization of a human cancer cell phosphoproteome.</title>
        <authorList>
            <person name="Zhou H."/>
            <person name="Di Palma S."/>
            <person name="Preisinger C."/>
            <person name="Peng M."/>
            <person name="Polat A.N."/>
            <person name="Heck A.J."/>
            <person name="Mohammed S."/>
        </authorList>
    </citation>
    <scope>PHOSPHORYLATION [LARGE SCALE ANALYSIS] AT SER-38</scope>
    <scope>IDENTIFICATION BY MASS SPECTROMETRY [LARGE SCALE ANALYSIS]</scope>
    <source>
        <tissue>Erythroleukemia</tissue>
    </source>
</reference>
<reference key="10">
    <citation type="journal article" date="2014" name="J. Proteomics">
        <title>An enzyme assisted RP-RPLC approach for in-depth analysis of human liver phosphoproteome.</title>
        <authorList>
            <person name="Bian Y."/>
            <person name="Song C."/>
            <person name="Cheng K."/>
            <person name="Dong M."/>
            <person name="Wang F."/>
            <person name="Huang J."/>
            <person name="Sun D."/>
            <person name="Wang L."/>
            <person name="Ye M."/>
            <person name="Zou H."/>
        </authorList>
    </citation>
    <scope>PHOSPHORYLATION [LARGE SCALE ANALYSIS] AT SER-38</scope>
    <scope>IDENTIFICATION BY MASS SPECTROMETRY [LARGE SCALE ANALYSIS]</scope>
    <source>
        <tissue>Liver</tissue>
    </source>
</reference>
<reference key="11">
    <citation type="journal article" date="2014" name="Nat. Commun.">
        <title>Global profiling of co- and post-translationally N-myristoylated proteomes in human cells.</title>
        <authorList>
            <person name="Thinon E."/>
            <person name="Serwa R.A."/>
            <person name="Broncel M."/>
            <person name="Brannigan J.A."/>
            <person name="Brassat U."/>
            <person name="Wright M.H."/>
            <person name="Heal W.P."/>
            <person name="Wilkinson A.J."/>
            <person name="Mann D.J."/>
            <person name="Tate E.W."/>
        </authorList>
    </citation>
    <scope>X-RAY CRYSTALLOGRAPHY (2.33 ANGSTROMS) OF 112-498 IN COMPLEX WITH SUBSTRATE ANALOG</scope>
    <scope>CATALYTIC ACTIVITY</scope>
    <scope>FUNCTION</scope>
</reference>
<reference evidence="8" key="12">
    <citation type="journal article" date="2020" name="Nat. Commun.">
        <title>NMT1 and NMT2 are lysine myristoyltransferases regulating the ARF6 GTPase cycle.</title>
        <authorList>
            <person name="Kosciuk T."/>
            <person name="Price I.R."/>
            <person name="Zhang X."/>
            <person name="Zhu C."/>
            <person name="Johnson K.N."/>
            <person name="Zhang S."/>
            <person name="Halaby S.L."/>
            <person name="Komaniecki G.P."/>
            <person name="Yang M."/>
            <person name="DeHart C.J."/>
            <person name="Thomas P.M."/>
            <person name="Kelleher N.L."/>
            <person name="Fromme J.C."/>
            <person name="Lin H."/>
        </authorList>
    </citation>
    <scope>X-RAY CRYSTALLOGRAPHY (1.93 ANGSTROMS) OF 116-498</scope>
    <scope>FUNCTION</scope>
    <scope>CATALYTIC ACTIVITY</scope>
</reference>
<keyword id="KW-0002">3D-structure</keyword>
<keyword id="KW-0012">Acyltransferase</keyword>
<keyword id="KW-0963">Cytoplasm</keyword>
<keyword id="KW-0472">Membrane</keyword>
<keyword id="KW-0597">Phosphoprotein</keyword>
<keyword id="KW-1267">Proteomics identification</keyword>
<keyword id="KW-1185">Reference proteome</keyword>
<keyword id="KW-0808">Transferase</keyword>
<evidence type="ECO:0000256" key="1">
    <source>
        <dbReference type="SAM" id="MobiDB-lite"/>
    </source>
</evidence>
<evidence type="ECO:0000269" key="2">
    <source>
    </source>
</evidence>
<evidence type="ECO:0000269" key="3">
    <source>
    </source>
</evidence>
<evidence type="ECO:0000269" key="4">
    <source>
    </source>
</evidence>
<evidence type="ECO:0000303" key="5">
    <source>
    </source>
</evidence>
<evidence type="ECO:0000305" key="6"/>
<evidence type="ECO:0000312" key="7">
    <source>
        <dbReference type="HGNC" id="HGNC:7858"/>
    </source>
</evidence>
<evidence type="ECO:0007744" key="8">
    <source>
        <dbReference type="PDB" id="6PAU"/>
    </source>
</evidence>
<evidence type="ECO:0007744" key="9">
    <source>
    </source>
</evidence>
<evidence type="ECO:0007744" key="10">
    <source>
    </source>
</evidence>
<evidence type="ECO:0007829" key="11">
    <source>
        <dbReference type="PDB" id="4C2X"/>
    </source>
</evidence>
<evidence type="ECO:0007829" key="12">
    <source>
        <dbReference type="PDB" id="6PAU"/>
    </source>
</evidence>
<accession>O60551</accession>
<accession>B0YJ49</accession>
<accession>Q53Y38</accession>
<accession>Q5VUC8</accession>
<accession>Q9BRB4</accession>